<proteinExistence type="evidence at protein level"/>
<accession>P50527</accession>
<evidence type="ECO:0000250" key="1"/>
<evidence type="ECO:0000255" key="2">
    <source>
        <dbReference type="PROSITE-ProRule" id="PRU00057"/>
    </source>
</evidence>
<evidence type="ECO:0000255" key="3">
    <source>
        <dbReference type="PROSITE-ProRule" id="PRU00159"/>
    </source>
</evidence>
<evidence type="ECO:0000255" key="4">
    <source>
        <dbReference type="PROSITE-ProRule" id="PRU10027"/>
    </source>
</evidence>
<evidence type="ECO:0000256" key="5">
    <source>
        <dbReference type="SAM" id="MobiDB-lite"/>
    </source>
</evidence>
<evidence type="ECO:0000269" key="6">
    <source>
    </source>
</evidence>
<evidence type="ECO:0000269" key="7">
    <source>
    </source>
</evidence>
<evidence type="ECO:0000269" key="8">
    <source>
    </source>
</evidence>
<evidence type="ECO:0000269" key="9">
    <source>
    </source>
</evidence>
<evidence type="ECO:0000269" key="10">
    <source>
    </source>
</evidence>
<evidence type="ECO:0000269" key="11">
    <source>
    </source>
</evidence>
<evidence type="ECO:0000269" key="12">
    <source>
    </source>
</evidence>
<evidence type="ECO:0000269" key="13">
    <source>
    </source>
</evidence>
<evidence type="ECO:0000269" key="14">
    <source>
    </source>
</evidence>
<evidence type="ECO:0000269" key="15">
    <source>
    </source>
</evidence>
<evidence type="ECO:0000269" key="16">
    <source>
    </source>
</evidence>
<evidence type="ECO:0000305" key="17"/>
<organism>
    <name type="scientific">Schizosaccharomyces pombe (strain 972 / ATCC 24843)</name>
    <name type="common">Fission yeast</name>
    <dbReference type="NCBI Taxonomy" id="284812"/>
    <lineage>
        <taxon>Eukaryota</taxon>
        <taxon>Fungi</taxon>
        <taxon>Dikarya</taxon>
        <taxon>Ascomycota</taxon>
        <taxon>Taphrinomycotina</taxon>
        <taxon>Schizosaccharomycetes</taxon>
        <taxon>Schizosaccharomycetales</taxon>
        <taxon>Schizosaccharomycetaceae</taxon>
        <taxon>Schizosaccharomyces</taxon>
    </lineage>
</organism>
<name>STE20_SCHPO</name>
<reference key="1">
    <citation type="journal article" date="1995" name="EMBO J.">
        <title>Fission yeast pak1+ encodes a protein kinase that interacts with Cdc42p and is involved in the control of cell polarity and mating.</title>
        <authorList>
            <person name="Ottilie S."/>
            <person name="Miller P.J."/>
            <person name="Johnson D.I."/>
            <person name="Creasy C.L."/>
            <person name="Sells M.A."/>
            <person name="Bagrodia S."/>
            <person name="Forsburg S.L."/>
            <person name="Chernoff J."/>
        </authorList>
    </citation>
    <scope>NUCLEOTIDE SEQUENCE [MRNA]</scope>
    <scope>INTERACTION WITH CDC42</scope>
    <scope>FUNCTION</scope>
</reference>
<reference key="2">
    <citation type="submission" date="1997-04" db="EMBL/GenBank/DDBJ databases">
        <authorList>
            <person name="Marcus S."/>
        </authorList>
    </citation>
    <scope>NUCLEOTIDE SEQUENCE [GENOMIC DNA]</scope>
</reference>
<reference key="3">
    <citation type="journal article" date="2002" name="Nature">
        <title>The genome sequence of Schizosaccharomyces pombe.</title>
        <authorList>
            <person name="Wood V."/>
            <person name="Gwilliam R."/>
            <person name="Rajandream M.A."/>
            <person name="Lyne M.H."/>
            <person name="Lyne R."/>
            <person name="Stewart A."/>
            <person name="Sgouros J.G."/>
            <person name="Peat N."/>
            <person name="Hayles J."/>
            <person name="Baker S.G."/>
            <person name="Basham D."/>
            <person name="Bowman S."/>
            <person name="Brooks K."/>
            <person name="Brown D."/>
            <person name="Brown S."/>
            <person name="Chillingworth T."/>
            <person name="Churcher C.M."/>
            <person name="Collins M."/>
            <person name="Connor R."/>
            <person name="Cronin A."/>
            <person name="Davis P."/>
            <person name="Feltwell T."/>
            <person name="Fraser A."/>
            <person name="Gentles S."/>
            <person name="Goble A."/>
            <person name="Hamlin N."/>
            <person name="Harris D.E."/>
            <person name="Hidalgo J."/>
            <person name="Hodgson G."/>
            <person name="Holroyd S."/>
            <person name="Hornsby T."/>
            <person name="Howarth S."/>
            <person name="Huckle E.J."/>
            <person name="Hunt S."/>
            <person name="Jagels K."/>
            <person name="James K.D."/>
            <person name="Jones L."/>
            <person name="Jones M."/>
            <person name="Leather S."/>
            <person name="McDonald S."/>
            <person name="McLean J."/>
            <person name="Mooney P."/>
            <person name="Moule S."/>
            <person name="Mungall K.L."/>
            <person name="Murphy L.D."/>
            <person name="Niblett D."/>
            <person name="Odell C."/>
            <person name="Oliver K."/>
            <person name="O'Neil S."/>
            <person name="Pearson D."/>
            <person name="Quail M.A."/>
            <person name="Rabbinowitsch E."/>
            <person name="Rutherford K.M."/>
            <person name="Rutter S."/>
            <person name="Saunders D."/>
            <person name="Seeger K."/>
            <person name="Sharp S."/>
            <person name="Skelton J."/>
            <person name="Simmonds M.N."/>
            <person name="Squares R."/>
            <person name="Squares S."/>
            <person name="Stevens K."/>
            <person name="Taylor K."/>
            <person name="Taylor R.G."/>
            <person name="Tivey A."/>
            <person name="Walsh S.V."/>
            <person name="Warren T."/>
            <person name="Whitehead S."/>
            <person name="Woodward J.R."/>
            <person name="Volckaert G."/>
            <person name="Aert R."/>
            <person name="Robben J."/>
            <person name="Grymonprez B."/>
            <person name="Weltjens I."/>
            <person name="Vanstreels E."/>
            <person name="Rieger M."/>
            <person name="Schaefer M."/>
            <person name="Mueller-Auer S."/>
            <person name="Gabel C."/>
            <person name="Fuchs M."/>
            <person name="Duesterhoeft A."/>
            <person name="Fritzc C."/>
            <person name="Holzer E."/>
            <person name="Moestl D."/>
            <person name="Hilbert H."/>
            <person name="Borzym K."/>
            <person name="Langer I."/>
            <person name="Beck A."/>
            <person name="Lehrach H."/>
            <person name="Reinhardt R."/>
            <person name="Pohl T.M."/>
            <person name="Eger P."/>
            <person name="Zimmermann W."/>
            <person name="Wedler H."/>
            <person name="Wambutt R."/>
            <person name="Purnelle B."/>
            <person name="Goffeau A."/>
            <person name="Cadieu E."/>
            <person name="Dreano S."/>
            <person name="Gloux S."/>
            <person name="Lelaure V."/>
            <person name="Mottier S."/>
            <person name="Galibert F."/>
            <person name="Aves S.J."/>
            <person name="Xiang Z."/>
            <person name="Hunt C."/>
            <person name="Moore K."/>
            <person name="Hurst S.M."/>
            <person name="Lucas M."/>
            <person name="Rochet M."/>
            <person name="Gaillardin C."/>
            <person name="Tallada V.A."/>
            <person name="Garzon A."/>
            <person name="Thode G."/>
            <person name="Daga R.R."/>
            <person name="Cruzado L."/>
            <person name="Jimenez J."/>
            <person name="Sanchez M."/>
            <person name="del Rey F."/>
            <person name="Benito J."/>
            <person name="Dominguez A."/>
            <person name="Revuelta J.L."/>
            <person name="Moreno S."/>
            <person name="Armstrong J."/>
            <person name="Forsburg S.L."/>
            <person name="Cerutti L."/>
            <person name="Lowe T."/>
            <person name="McCombie W.R."/>
            <person name="Paulsen I."/>
            <person name="Potashkin J."/>
            <person name="Shpakovski G.V."/>
            <person name="Ussery D."/>
            <person name="Barrell B.G."/>
            <person name="Nurse P."/>
        </authorList>
    </citation>
    <scope>NUCLEOTIDE SEQUENCE [LARGE SCALE GENOMIC DNA]</scope>
    <source>
        <strain>972 / ATCC 24843</strain>
    </source>
</reference>
<reference key="4">
    <citation type="journal article" date="1995" name="Proc. Natl. Acad. Sci. U.S.A.">
        <title>Shk1, a homolog of the Saccharomyces cerevisiae Ste20 and mammalian p65PAK protein kinases, is a component of a Ras/Cdc42 signaling module in the fission yeast Schizosaccharomyces pombe.</title>
        <authorList>
            <person name="Marcus S."/>
            <person name="Polverino A."/>
            <person name="Chang E."/>
            <person name="Robbins D."/>
            <person name="Cobb M.H."/>
            <person name="Wigler M."/>
        </authorList>
    </citation>
    <scope>NUCLEOTIDE SEQUENCE [GENOMIC DNA] OF 119-658</scope>
    <scope>INTERACTION WITH CDC42</scope>
    <scope>FUNCTION</scope>
</reference>
<reference key="5">
    <citation type="journal article" date="1996" name="Proc. Natl. Acad. Sci. U.S.A.">
        <title>The highly conserved skb1 gene encodes a protein that interacts with Shk1, a fission yeast Ste20/PAK homolog.</title>
        <authorList>
            <person name="Gilbreth M."/>
            <person name="Yang P."/>
            <person name="Wang D."/>
            <person name="Frost J."/>
            <person name="Polverino A."/>
            <person name="Cobb M.H."/>
            <person name="Marcus S."/>
        </authorList>
    </citation>
    <scope>FUNCTION</scope>
    <scope>INTERACTION WITH SKB1</scope>
</reference>
<reference key="6">
    <citation type="journal article" date="1998" name="Proc. Natl. Acad. Sci. U.S.A.">
        <title>Negative regulation of mitosis in fission yeast by the shk1 interacting protein skb1 and its human homolog, Skb1Hs.</title>
        <authorList>
            <person name="Gilbreth M."/>
            <person name="Yang P."/>
            <person name="Bartholomeusz G."/>
            <person name="Pimental R.A."/>
            <person name="Kansra S."/>
            <person name="Gadiraju R."/>
            <person name="Marcus S."/>
        </authorList>
    </citation>
    <scope>FUNCTION</scope>
    <scope>INTERACTION WITH CDC42</scope>
</reference>
<reference key="7">
    <citation type="journal article" date="1999" name="Curr. Biol.">
        <title>Mis-specification of cortical identity in a fission yeast PAK mutant.</title>
        <authorList>
            <person name="Sawin K.E."/>
            <person name="Hajibagheri M.A.N."/>
            <person name="Nurse P."/>
        </authorList>
    </citation>
    <scope>FUNCTION</scope>
</reference>
<reference key="8">
    <citation type="journal article" date="1999" name="J. Biol. Chem.">
        <title>Direct activation of the fission yeast PAK Shk1 by the novel SH3 domain protein, Skb5.</title>
        <authorList>
            <person name="Yang P."/>
            <person name="Pimental R.A."/>
            <person name="Lai H."/>
            <person name="Marcus S."/>
        </authorList>
    </citation>
    <scope>INTERACTION WITH SKB5</scope>
</reference>
<reference key="9">
    <citation type="journal article" date="1999" name="Mol. Cell. Biol.">
        <title>Direct binding and In vivo regulation of the fission yeast p21-activated kinase shk1 by the SH3 domain protein scd2.</title>
        <authorList>
            <person name="Chang E."/>
            <person name="Bartholomeusz G."/>
            <person name="Pimental R.A."/>
            <person name="Chen J."/>
            <person name="Lai H."/>
            <person name="Wang L.L."/>
            <person name="Yang P."/>
            <person name="Marcus S."/>
        </authorList>
    </citation>
    <scope>INTERACTION WITH SCD2</scope>
    <scope>AUTOPHOSPHORYLATION</scope>
</reference>
<reference key="10">
    <citation type="journal article" date="2002" name="Mol. Microbiol.">
        <title>The p21-activated kinase, Shk1, is required for proper regulation of microtubule dynamics in the fission yeast, Schizosaccharomyces pombe.</title>
        <authorList>
            <person name="Qyang Y."/>
            <person name="Yang P."/>
            <person name="Du H."/>
            <person name="Lai H."/>
            <person name="Kim H."/>
            <person name="Marcus S."/>
        </authorList>
    </citation>
    <scope>FUNCTION</scope>
    <scope>SUBCELLULAR LOCATION</scope>
</reference>
<reference key="11">
    <citation type="journal article" date="2003" name="J. Biol. Chem.">
        <title>The kelch repeat protein, Tea1, is a potential substrate target of the p21-activated kinase, Shk1, in the fission yeast, Schizosaccharomyces pombe.</title>
        <authorList>
            <person name="Kim H."/>
            <person name="Yang P."/>
            <person name="Catanuto P."/>
            <person name="Verde F."/>
            <person name="Lai H."/>
            <person name="Du H."/>
            <person name="Chang F."/>
            <person name="Marcus S."/>
        </authorList>
    </citation>
    <scope>FUNCTION IN PHOSPHORYLATION OF TEA1</scope>
</reference>
<reference key="12">
    <citation type="journal article" date="2003" name="J. Biol. Chem.">
        <title>The novel Rho GTPase-activating protein family protein, Rga8, provides a potential link between Cdc42/p21-activated kinase and Rho signaling pathways in the fission yeast, Schizosaccharomyces pombe.</title>
        <authorList>
            <person name="Yang P."/>
            <person name="Qyang Y."/>
            <person name="Bartholomeusz G."/>
            <person name="Zhou X."/>
            <person name="Marcus S."/>
        </authorList>
    </citation>
    <scope>INTERACTION WITH RGA8</scope>
</reference>
<reference key="13">
    <citation type="journal article" date="2008" name="J. Proteome Res.">
        <title>Phosphoproteome analysis of fission yeast.</title>
        <authorList>
            <person name="Wilson-Grady J.T."/>
            <person name="Villen J."/>
            <person name="Gygi S.P."/>
        </authorList>
    </citation>
    <scope>PHOSPHORYLATION [LARGE SCALE ANALYSIS] AT SER-301 AND SER-303</scope>
    <scope>IDENTIFICATION BY MASS SPECTROMETRY</scope>
</reference>
<dbReference type="EC" id="2.7.11.1"/>
<dbReference type="EMBL" id="U22371">
    <property type="protein sequence ID" value="AAC49125.1"/>
    <property type="molecule type" value="mRNA"/>
</dbReference>
<dbReference type="EMBL" id="L41552">
    <property type="protein sequence ID" value="AAB52609.1"/>
    <property type="molecule type" value="Genomic_DNA"/>
</dbReference>
<dbReference type="EMBL" id="CU329671">
    <property type="protein sequence ID" value="CAA22347.1"/>
    <property type="molecule type" value="Genomic_DNA"/>
</dbReference>
<dbReference type="PIR" id="S60170">
    <property type="entry name" value="S60170"/>
</dbReference>
<dbReference type="PIR" id="T39500">
    <property type="entry name" value="T39500"/>
</dbReference>
<dbReference type="RefSeq" id="NP_596626.1">
    <property type="nucleotide sequence ID" value="NM_001022547.2"/>
</dbReference>
<dbReference type="SMR" id="P50527"/>
<dbReference type="BioGRID" id="276541">
    <property type="interactions" value="24"/>
</dbReference>
<dbReference type="DIP" id="DIP-949N"/>
<dbReference type="FunCoup" id="P50527">
    <property type="interactions" value="545"/>
</dbReference>
<dbReference type="IntAct" id="P50527">
    <property type="interactions" value="1"/>
</dbReference>
<dbReference type="MINT" id="P50527"/>
<dbReference type="STRING" id="284812.P50527"/>
<dbReference type="iPTMnet" id="P50527"/>
<dbReference type="PaxDb" id="4896-SPBC1604.14c.1"/>
<dbReference type="EnsemblFungi" id="SPBC1604.14c.1">
    <property type="protein sequence ID" value="SPBC1604.14c.1:pep"/>
    <property type="gene ID" value="SPBC1604.14c"/>
</dbReference>
<dbReference type="GeneID" id="2539997"/>
<dbReference type="KEGG" id="spo:2539997"/>
<dbReference type="PomBase" id="SPBC1604.14c">
    <property type="gene designation" value="shk1"/>
</dbReference>
<dbReference type="VEuPathDB" id="FungiDB:SPBC1604.14c"/>
<dbReference type="eggNOG" id="KOG0578">
    <property type="taxonomic scope" value="Eukaryota"/>
</dbReference>
<dbReference type="HOGENOM" id="CLU_000288_26_6_1"/>
<dbReference type="InParanoid" id="P50527"/>
<dbReference type="OMA" id="YMDFPPL"/>
<dbReference type="PhylomeDB" id="P50527"/>
<dbReference type="BRENDA" id="2.7.11.1">
    <property type="organism ID" value="5613"/>
</dbReference>
<dbReference type="Reactome" id="R-SPO-2029482">
    <property type="pathway name" value="Regulation of actin dynamics for phagocytic cup formation"/>
</dbReference>
<dbReference type="Reactome" id="R-SPO-389359">
    <property type="pathway name" value="CD28 dependent Vav1 pathway"/>
</dbReference>
<dbReference type="Reactome" id="R-SPO-5627123">
    <property type="pathway name" value="RHO GTPases activate PAKs"/>
</dbReference>
<dbReference type="Reactome" id="R-SPO-5687128">
    <property type="pathway name" value="MAPK6/MAPK4 signaling"/>
</dbReference>
<dbReference type="Reactome" id="R-SPO-9013405">
    <property type="pathway name" value="RHOD GTPase cycle"/>
</dbReference>
<dbReference type="Reactome" id="R-SPO-9013406">
    <property type="pathway name" value="RHOQ GTPase cycle"/>
</dbReference>
<dbReference type="Reactome" id="R-SPO-9013420">
    <property type="pathway name" value="RHOU GTPase cycle"/>
</dbReference>
<dbReference type="Reactome" id="R-SPO-9013424">
    <property type="pathway name" value="RHOV GTPase cycle"/>
</dbReference>
<dbReference type="PRO" id="PR:P50527"/>
<dbReference type="Proteomes" id="UP000002485">
    <property type="component" value="Chromosome II"/>
</dbReference>
<dbReference type="GO" id="GO:0071521">
    <property type="term" value="C:Cdc42 GTPase complex"/>
    <property type="evidence" value="ECO:0000353"/>
    <property type="project" value="PomBase"/>
</dbReference>
<dbReference type="GO" id="GO:0051285">
    <property type="term" value="C:cell cortex of cell tip"/>
    <property type="evidence" value="ECO:0000269"/>
    <property type="project" value="PomBase"/>
</dbReference>
<dbReference type="GO" id="GO:0032153">
    <property type="term" value="C:cell division site"/>
    <property type="evidence" value="ECO:0000314"/>
    <property type="project" value="PomBase"/>
</dbReference>
<dbReference type="GO" id="GO:0051286">
    <property type="term" value="C:cell tip"/>
    <property type="evidence" value="ECO:0000314"/>
    <property type="project" value="PomBase"/>
</dbReference>
<dbReference type="GO" id="GO:0005737">
    <property type="term" value="C:cytoplasm"/>
    <property type="evidence" value="ECO:0000318"/>
    <property type="project" value="GO_Central"/>
</dbReference>
<dbReference type="GO" id="GO:0005829">
    <property type="term" value="C:cytosol"/>
    <property type="evidence" value="ECO:0007005"/>
    <property type="project" value="PomBase"/>
</dbReference>
<dbReference type="GO" id="GO:0110085">
    <property type="term" value="C:mitotic actomyosin contractile ring"/>
    <property type="evidence" value="ECO:0000314"/>
    <property type="project" value="PomBase"/>
</dbReference>
<dbReference type="GO" id="GO:0120105">
    <property type="term" value="C:mitotic actomyosin contractile ring, intermediate layer"/>
    <property type="evidence" value="ECO:0000314"/>
    <property type="project" value="PomBase"/>
</dbReference>
<dbReference type="GO" id="GO:0005876">
    <property type="term" value="C:spindle microtubule"/>
    <property type="evidence" value="ECO:0000314"/>
    <property type="project" value="PomBase"/>
</dbReference>
<dbReference type="GO" id="GO:0005524">
    <property type="term" value="F:ATP binding"/>
    <property type="evidence" value="ECO:0007669"/>
    <property type="project" value="UniProtKB-KW"/>
</dbReference>
<dbReference type="GO" id="GO:0106310">
    <property type="term" value="F:protein serine kinase activity"/>
    <property type="evidence" value="ECO:0007669"/>
    <property type="project" value="RHEA"/>
</dbReference>
<dbReference type="GO" id="GO:0004674">
    <property type="term" value="F:protein serine/threonine kinase activity"/>
    <property type="evidence" value="ECO:0000314"/>
    <property type="project" value="PomBase"/>
</dbReference>
<dbReference type="GO" id="GO:0007015">
    <property type="term" value="P:actin filament organization"/>
    <property type="evidence" value="ECO:0007669"/>
    <property type="project" value="InterPro"/>
</dbReference>
<dbReference type="GO" id="GO:0009267">
    <property type="term" value="P:cellular response to starvation"/>
    <property type="evidence" value="ECO:0000318"/>
    <property type="project" value="GO_Central"/>
</dbReference>
<dbReference type="GO" id="GO:0035556">
    <property type="term" value="P:intracellular signal transduction"/>
    <property type="evidence" value="ECO:0000318"/>
    <property type="project" value="GO_Central"/>
</dbReference>
<dbReference type="GO" id="GO:1903472">
    <property type="term" value="P:negative regulation of mitotic actomyosin contractile ring contraction"/>
    <property type="evidence" value="ECO:0000315"/>
    <property type="project" value="PomBase"/>
</dbReference>
<dbReference type="GO" id="GO:0045807">
    <property type="term" value="P:positive regulation of endocytosis"/>
    <property type="evidence" value="ECO:0000269"/>
    <property type="project" value="PomBase"/>
</dbReference>
<dbReference type="GO" id="GO:0061173">
    <property type="term" value="P:positive regulation of establishment of bipolar cell polarity"/>
    <property type="evidence" value="ECO:0000316"/>
    <property type="project" value="PomBase"/>
</dbReference>
<dbReference type="GO" id="GO:2000247">
    <property type="term" value="P:positive regulation of establishment or maintenance of bipolar cell polarity regulating cell shape"/>
    <property type="evidence" value="ECO:0000315"/>
    <property type="project" value="PomBase"/>
</dbReference>
<dbReference type="GO" id="GO:0061361">
    <property type="term" value="P:positive regulation of maintenance of bipolar cell polarity regulating cell shape"/>
    <property type="evidence" value="ECO:0000269"/>
    <property type="project" value="PomBase"/>
</dbReference>
<dbReference type="GO" id="GO:1903617">
    <property type="term" value="P:positive regulation of mitotic cytokinesis, division site positioning"/>
    <property type="evidence" value="ECO:0000269"/>
    <property type="project" value="PomBase"/>
</dbReference>
<dbReference type="GO" id="GO:0062038">
    <property type="term" value="P:positive regulation of pheromone response MAPK cascade"/>
    <property type="evidence" value="ECO:0000315"/>
    <property type="project" value="PomBase"/>
</dbReference>
<dbReference type="GO" id="GO:0043408">
    <property type="term" value="P:regulation of MAPK cascade"/>
    <property type="evidence" value="ECO:0000318"/>
    <property type="project" value="GO_Central"/>
</dbReference>
<dbReference type="GO" id="GO:0070507">
    <property type="term" value="P:regulation of microtubule cytoskeleton organization"/>
    <property type="evidence" value="ECO:0000316"/>
    <property type="project" value="PomBase"/>
</dbReference>
<dbReference type="CDD" id="cd01093">
    <property type="entry name" value="CRIB_PAK_like"/>
    <property type="match status" value="1"/>
</dbReference>
<dbReference type="CDD" id="cd06614">
    <property type="entry name" value="STKc_PAK"/>
    <property type="match status" value="1"/>
</dbReference>
<dbReference type="FunFam" id="1.10.510.10:FF:000011">
    <property type="entry name" value="Non-specific serine/threonine protein kinase"/>
    <property type="match status" value="1"/>
</dbReference>
<dbReference type="Gene3D" id="3.90.810.10">
    <property type="entry name" value="CRIB domain"/>
    <property type="match status" value="1"/>
</dbReference>
<dbReference type="Gene3D" id="3.30.200.20">
    <property type="entry name" value="Phosphorylase Kinase, domain 1"/>
    <property type="match status" value="1"/>
</dbReference>
<dbReference type="Gene3D" id="1.10.510.10">
    <property type="entry name" value="Transferase(Phosphotransferase) domain 1"/>
    <property type="match status" value="1"/>
</dbReference>
<dbReference type="InterPro" id="IPR000095">
    <property type="entry name" value="CRIB_dom"/>
</dbReference>
<dbReference type="InterPro" id="IPR036936">
    <property type="entry name" value="CRIB_dom_sf"/>
</dbReference>
<dbReference type="InterPro" id="IPR011009">
    <property type="entry name" value="Kinase-like_dom_sf"/>
</dbReference>
<dbReference type="InterPro" id="IPR051931">
    <property type="entry name" value="PAK3-like"/>
</dbReference>
<dbReference type="InterPro" id="IPR033923">
    <property type="entry name" value="PAK_BD"/>
</dbReference>
<dbReference type="InterPro" id="IPR000719">
    <property type="entry name" value="Prot_kinase_dom"/>
</dbReference>
<dbReference type="InterPro" id="IPR017441">
    <property type="entry name" value="Protein_kinase_ATP_BS"/>
</dbReference>
<dbReference type="InterPro" id="IPR008271">
    <property type="entry name" value="Ser/Thr_kinase_AS"/>
</dbReference>
<dbReference type="InterPro" id="IPR011026">
    <property type="entry name" value="WAS_C"/>
</dbReference>
<dbReference type="PANTHER" id="PTHR45832">
    <property type="entry name" value="SERINE/THREONINE-PROTEIN KINASE SAMKA-RELATED-RELATED"/>
    <property type="match status" value="1"/>
</dbReference>
<dbReference type="PANTHER" id="PTHR45832:SF22">
    <property type="entry name" value="SERINE_THREONINE-PROTEIN KINASE SAMKA-RELATED"/>
    <property type="match status" value="1"/>
</dbReference>
<dbReference type="Pfam" id="PF00786">
    <property type="entry name" value="PBD"/>
    <property type="match status" value="1"/>
</dbReference>
<dbReference type="Pfam" id="PF00069">
    <property type="entry name" value="Pkinase"/>
    <property type="match status" value="1"/>
</dbReference>
<dbReference type="SMART" id="SM00285">
    <property type="entry name" value="PBD"/>
    <property type="match status" value="1"/>
</dbReference>
<dbReference type="SMART" id="SM00220">
    <property type="entry name" value="S_TKc"/>
    <property type="match status" value="1"/>
</dbReference>
<dbReference type="SUPFAM" id="SSF56112">
    <property type="entry name" value="Protein kinase-like (PK-like)"/>
    <property type="match status" value="1"/>
</dbReference>
<dbReference type="SUPFAM" id="SSF47912">
    <property type="entry name" value="Wiscott-Aldrich syndrome protein, WASP, C-terminal domain"/>
    <property type="match status" value="1"/>
</dbReference>
<dbReference type="PROSITE" id="PS50108">
    <property type="entry name" value="CRIB"/>
    <property type="match status" value="1"/>
</dbReference>
<dbReference type="PROSITE" id="PS00107">
    <property type="entry name" value="PROTEIN_KINASE_ATP"/>
    <property type="match status" value="1"/>
</dbReference>
<dbReference type="PROSITE" id="PS50011">
    <property type="entry name" value="PROTEIN_KINASE_DOM"/>
    <property type="match status" value="1"/>
</dbReference>
<dbReference type="PROSITE" id="PS00108">
    <property type="entry name" value="PROTEIN_KINASE_ST"/>
    <property type="match status" value="1"/>
</dbReference>
<comment type="function">
    <text evidence="1 7 9 10 13 14 15 16">MAP4K component of the MAPK pathway required for the mating pheromone response. Phosphorylates histone H2B to form H2BS10ph (By similarity). Phosphorylates tea1. Required for skb1-dependent mitotic inhibitory function. Regulates microtubule dynamics and cell polarity.</text>
</comment>
<comment type="catalytic activity">
    <reaction>
        <text>L-seryl-[protein] + ATP = O-phospho-L-seryl-[protein] + ADP + H(+)</text>
        <dbReference type="Rhea" id="RHEA:17989"/>
        <dbReference type="Rhea" id="RHEA-COMP:9863"/>
        <dbReference type="Rhea" id="RHEA-COMP:11604"/>
        <dbReference type="ChEBI" id="CHEBI:15378"/>
        <dbReference type="ChEBI" id="CHEBI:29999"/>
        <dbReference type="ChEBI" id="CHEBI:30616"/>
        <dbReference type="ChEBI" id="CHEBI:83421"/>
        <dbReference type="ChEBI" id="CHEBI:456216"/>
        <dbReference type="EC" id="2.7.11.1"/>
    </reaction>
</comment>
<comment type="catalytic activity">
    <reaction>
        <text>L-threonyl-[protein] + ATP = O-phospho-L-threonyl-[protein] + ADP + H(+)</text>
        <dbReference type="Rhea" id="RHEA:46608"/>
        <dbReference type="Rhea" id="RHEA-COMP:11060"/>
        <dbReference type="Rhea" id="RHEA-COMP:11605"/>
        <dbReference type="ChEBI" id="CHEBI:15378"/>
        <dbReference type="ChEBI" id="CHEBI:30013"/>
        <dbReference type="ChEBI" id="CHEBI:30616"/>
        <dbReference type="ChEBI" id="CHEBI:61977"/>
        <dbReference type="ChEBI" id="CHEBI:456216"/>
        <dbReference type="EC" id="2.7.11.1"/>
    </reaction>
</comment>
<comment type="subunit">
    <text evidence="6 8 11 13 14 15 16">Forms an activated complex with GTP-bound ras-like cdc42. Interacts with skb1 and the SH3 domain of skb5 via its amino-terminal regulatory domain. Skb1, cdc42 and shk1 are able to form a ternary complex in vivo. Interacts with rga8 and may interact with byr2.</text>
</comment>
<comment type="subcellular location">
    <subcellularLocation>
        <location evidence="9">Cytoplasm</location>
    </subcellularLocation>
    <subcellularLocation>
        <location evidence="9">Cytoplasm</location>
        <location evidence="9">Cytoskeleton</location>
        <location evidence="9">Spindle</location>
    </subcellularLocation>
    <text>Localizes at cell ends, septum forming regions and at the mitotic spindle.</text>
</comment>
<comment type="PTM">
    <text evidence="12">Autophosphorylated on serine residues.</text>
</comment>
<comment type="similarity">
    <text evidence="17">Belongs to the protein kinase superfamily. STE Ser/Thr protein kinase family. STE20 subfamily.</text>
</comment>
<feature type="chain" id="PRO_0000086651" description="Serine/threonine-protein kinase shk1/pak1">
    <location>
        <begin position="1"/>
        <end position="658"/>
    </location>
</feature>
<feature type="domain" description="CRIB" evidence="2">
    <location>
        <begin position="147"/>
        <end position="160"/>
    </location>
</feature>
<feature type="domain" description="Protein kinase" evidence="3">
    <location>
        <begin position="386"/>
        <end position="637"/>
    </location>
</feature>
<feature type="region of interest" description="Disordered" evidence="5">
    <location>
        <begin position="1"/>
        <end position="21"/>
    </location>
</feature>
<feature type="region of interest" description="Disordered" evidence="5">
    <location>
        <begin position="39"/>
        <end position="104"/>
    </location>
</feature>
<feature type="region of interest" description="Disordered" evidence="5">
    <location>
        <begin position="126"/>
        <end position="147"/>
    </location>
</feature>
<feature type="region of interest" description="Disordered" evidence="5">
    <location>
        <begin position="213"/>
        <end position="365"/>
    </location>
</feature>
<feature type="compositionally biased region" description="Polar residues" evidence="5">
    <location>
        <begin position="66"/>
        <end position="98"/>
    </location>
</feature>
<feature type="compositionally biased region" description="Low complexity" evidence="5">
    <location>
        <begin position="129"/>
        <end position="140"/>
    </location>
</feature>
<feature type="compositionally biased region" description="Low complexity" evidence="5">
    <location>
        <begin position="226"/>
        <end position="254"/>
    </location>
</feature>
<feature type="compositionally biased region" description="Low complexity" evidence="5">
    <location>
        <begin position="262"/>
        <end position="272"/>
    </location>
</feature>
<feature type="compositionally biased region" description="Polar residues" evidence="5">
    <location>
        <begin position="273"/>
        <end position="300"/>
    </location>
</feature>
<feature type="active site" description="Proton acceptor" evidence="3 4">
    <location>
        <position position="505"/>
    </location>
</feature>
<feature type="binding site" evidence="3">
    <location>
        <begin position="392"/>
        <end position="400"/>
    </location>
    <ligand>
        <name>ATP</name>
        <dbReference type="ChEBI" id="CHEBI:30616"/>
    </ligand>
</feature>
<feature type="binding site" evidence="3">
    <location>
        <position position="415"/>
    </location>
    <ligand>
        <name>ATP</name>
        <dbReference type="ChEBI" id="CHEBI:30616"/>
    </ligand>
</feature>
<feature type="modified residue" description="Phosphoserine" evidence="12">
    <location>
        <position position="301"/>
    </location>
</feature>
<feature type="modified residue" description="Phosphoserine" evidence="12">
    <location>
        <position position="303"/>
    </location>
</feature>
<feature type="sequence conflict" description="In Ref. 1; AAC49125." evidence="17" ref="1">
    <original>GLQH</original>
    <variation>LYSD</variation>
    <location>
        <begin position="492"/>
        <end position="495"/>
    </location>
</feature>
<feature type="sequence conflict" description="In Ref. 1; AAC49125." evidence="17" ref="1">
    <original>R</original>
    <variation>P</variation>
    <location>
        <position position="537"/>
    </location>
</feature>
<protein>
    <recommendedName>
        <fullName>Serine/threonine-protein kinase shk1/pak1</fullName>
        <ecNumber>2.7.11.1</ecNumber>
    </recommendedName>
</protein>
<gene>
    <name type="primary">shk1</name>
    <name type="synonym">orb2</name>
    <name type="synonym">pak1</name>
    <name type="synonym">ste20</name>
    <name type="ORF">SPBC1604.14c</name>
</gene>
<keyword id="KW-0067">ATP-binding</keyword>
<keyword id="KW-0963">Cytoplasm</keyword>
<keyword id="KW-0206">Cytoskeleton</keyword>
<keyword id="KW-0418">Kinase</keyword>
<keyword id="KW-0547">Nucleotide-binding</keyword>
<keyword id="KW-0597">Phosphoprotein</keyword>
<keyword id="KW-1185">Reference proteome</keyword>
<keyword id="KW-0723">Serine/threonine-protein kinase</keyword>
<keyword id="KW-0808">Transferase</keyword>
<sequence>MERGTLQPRKKAPNGYGITPIVAHKTGEPVRYEVEDDLRKLKPSRTAPKPPAINTNLAEDTFSGFPLSQSRTTVSRVSLGSRQHSSSSIRKLQTNVSDVRSYDERNQKKSAFENFVSSMSSFLTGGGSSPTSSYGSGSASPRKSTVISSPFDPKHVTHVGFNYDTGEFTGMPTEWQALLKVSGITKSEQVQHPQAVLDAMAFYSQSKKYLEEGAKPPFPRESTEKPLLSVSALSSSSHLQPTSATSSSSRLYPSRPAPTPPASSSSSPLLSSQTVKTTTSNASRQPSPLVSSKSTDNIIRSHSPVLLTPQTLSTSETKHIRPNNSTPYQRRAETSTKPKAVATPQKVEAPSAPRLQKRAPRQQSNDSAVLAKLQSICNPKNPTLLYRNFVKIGQGASGDVYSARQVGTNLSVAIKKMNINQQPKKEFIVNEILVMKSHHHKNIVNFIDTFFYKSELWMVMEYMRGGSLTEVVTNNTLSEGQIAAICKETLEGLQHLHENGIVHRDIKSDNILLSLQGDIKLTDFGFCAQIDSNMTKRTTMVGTPYWMAPEVVTRKEYGFKVDVWSLGIMAIEMVEGEPPYLNENPLRALYLIATIGTPKISRPELLSSVFHDFLSKSLTVNPKQRPSSGELLRHPFLKQAVPVSSLIPLIKSIHHSGK</sequence>